<keyword id="KW-0122">Cardiomyopathy</keyword>
<keyword id="KW-0965">Cell junction</keyword>
<keyword id="KW-1003">Cell membrane</keyword>
<keyword id="KW-0175">Coiled coil</keyword>
<keyword id="KW-0963">Cytoplasm</keyword>
<keyword id="KW-0449">Lipoprotein</keyword>
<keyword id="KW-0472">Membrane</keyword>
<keyword id="KW-0488">Methylation</keyword>
<keyword id="KW-0597">Phosphoprotein</keyword>
<keyword id="KW-1185">Reference proteome</keyword>
<keyword id="KW-0677">Repeat</keyword>
<keyword id="KW-0728">SH3 domain</keyword>
<evidence type="ECO:0000250" key="1"/>
<evidence type="ECO:0000250" key="2">
    <source>
        <dbReference type="UniProtKB" id="F1LMV6"/>
    </source>
</evidence>
<evidence type="ECO:0000250" key="3">
    <source>
        <dbReference type="UniProtKB" id="P15924"/>
    </source>
</evidence>
<evidence type="ECO:0000255" key="4"/>
<evidence type="ECO:0000255" key="5">
    <source>
        <dbReference type="PROSITE-ProRule" id="PRU00192"/>
    </source>
</evidence>
<evidence type="ECO:0000256" key="6">
    <source>
        <dbReference type="SAM" id="MobiDB-lite"/>
    </source>
</evidence>
<evidence type="ECO:0000269" key="7">
    <source>
    </source>
</evidence>
<evidence type="ECO:0000269" key="8">
    <source>
    </source>
</evidence>
<evidence type="ECO:0000269" key="9">
    <source>
    </source>
</evidence>
<evidence type="ECO:0000269" key="10">
    <source>
    </source>
</evidence>
<evidence type="ECO:0000269" key="11">
    <source>
    </source>
</evidence>
<evidence type="ECO:0000269" key="12">
    <source>
    </source>
</evidence>
<evidence type="ECO:0000269" key="13">
    <source>
    </source>
</evidence>
<evidence type="ECO:0000269" key="14">
    <source>
    </source>
</evidence>
<evidence type="ECO:0000269" key="15">
    <source>
    </source>
</evidence>
<evidence type="ECO:0000269" key="16">
    <source>
    </source>
</evidence>
<evidence type="ECO:0000305" key="17"/>
<evidence type="ECO:0000312" key="18">
    <source>
        <dbReference type="MGI" id="MGI:109611"/>
    </source>
</evidence>
<evidence type="ECO:0007744" key="19">
    <source>
    </source>
</evidence>
<evidence type="ECO:0007744" key="20">
    <source>
    </source>
</evidence>
<evidence type="ECO:0007744" key="21">
    <source>
    </source>
</evidence>
<gene>
    <name evidence="18" type="primary">Dsp</name>
</gene>
<comment type="function">
    <text evidence="2">Major high molecular weight protein of desmosomes. Regulates profibrotic gene expression in cardiomyocytes via activation of the MAPK14/p38 MAPK signaling cascade and increase in TGFB1 protein abundance (By similarity).</text>
</comment>
<comment type="subunit">
    <text evidence="3 12">Homodimer (By similarity). Interacts with COL17A1 (via cytoplasmic region) (By similarity). Interacts with DSC2 (By similarity). Interacts with PKP1 (By similarity). Interacts with PKP2 (By similarity). Interacts weakly with TMEM65 (PubMed:26403541).</text>
</comment>
<comment type="subcellular location">
    <subcellularLocation>
        <location evidence="7 8 9 11 13 14 15 16">Cell junction</location>
        <location evidence="7 8 9 11 13 14 15 16">Desmosome</location>
    </subcellularLocation>
    <subcellularLocation>
        <location evidence="10 11 12">Cell membrane</location>
    </subcellularLocation>
    <subcellularLocation>
        <location evidence="13 14 15">Cytoplasm</location>
    </subcellularLocation>
    <text evidence="3 14">Localizes to desmosome precursor particles in the cytoplasm (By similarity). Localizes to the cytoplasm in undifferentiated keratinocytes however becomes localizes to both lateral and tricellular cell-cell contacts as differentiation progresses and as epithelial sheet formation completes (PubMed:27375112).</text>
</comment>
<comment type="tissue specificity">
    <text evidence="9 12 14">Expressed in undifferentiated keratinocytes of the epidermis at birth, expression increases as differentiation proceeds (at protein level) (PubMed:18079750, PubMed:27375112). Abundantly expressed in the suprabasal layers and weakly in the basal layers of the outer hair root sheath (at protein level) (PubMed:18079750). Expressed at intercalated disks in cardiomyocytes (at protein level) (PubMed:26403541).</text>
</comment>
<comment type="developmental stage">
    <text evidence="13">Expressed in keratinocytes of newborn mice (at protein level).</text>
</comment>
<comment type="domain">
    <text evidence="3">The N-terminal region is required for localization to the desmosomal plaque and interacts with the N-terminal region of PKP1.</text>
</comment>
<comment type="PTM">
    <text evidence="3">Phosphorylation at Ser-2860 increases association with intermediate filament cytokeratin, potentially facilitating interaction between desmosome junctions and intermediate filament architecture.</text>
</comment>
<comment type="similarity">
    <text evidence="17">Belongs to the plakin or cytolinker family.</text>
</comment>
<proteinExistence type="evidence at protein level"/>
<sequence>MSCNGGSHPRINTLGRMTRAESGPDLRYEMTYSGGGGGGGGGGGGGTSRTFYSHSRRCTVNDQNSDGYCQTGTMSRHQNQNTIQEMLQNCSDCLMRAELIAQPELKFGEGMQLAWNRELDEYFTQANDQMEIIDGLIREMRQMGQPCDAYQKRLLQLQEQMRALYKAISVPRVRRASSKGAGGYTCQSGSGWDEFTKRLTGECLGWMRQQREEMDLMAWGVDAGSVEQHINSHRSIHNTIGDYRWQLDKIKADLREKSAIYQLEEEYENLLKASFERMDHLRQLQNIIQATSREIMWINDCEEEELLYDWSDKNTNIAQKQEAFSIRMSQLEVKEKELNKLKQESDQLVLNQHPASDKIEAYMDTLQTQWSWILQITKCIDVHLKENAAYFQFFEEAQSTEAYLKGLQDSIRKKYPCDKNMPLQHLLEQIKELEKEREKIIEYKRQVQNLVNKSKKIVQLKPRNPDYRSNKPIILRALCDYKQDQKIVHKGDECILKDNNERSKWYVTGPGGVDMLVPSVGLIIPPPNPLAVDLSCKIEQYYEAILALWNQLYINMKSLVSWHYCMIDIEKIRAMTIAKLKTMRQEDYMKTIEDLELHYQDFIKNSQGSEMFGDDDKRRMQSQFTDAQKHYQTLVIQLPGHPQHQTVTKTEITHLGTCQDVNHNKVIETNRENDKQETWLLMELQKIRRQMEHCEARMTLKNLLLAEQGSTHHITVKINELKSVQNDSQALAEVLNQLKDMLANFRGSEKYCYLQNEIFGLFQKLENINGVSDGYLNSLCSVRALLQAILQTEDMLKVYEARLTEEETVCLDLDKVEAYRCGLKKIKNDLNLKKSLLATMKTELQKAQQIHSQSSQQYPLYDLDLGKFTEKVTQLTDRWQKIDKQIDFRLWDLEKQIKQLRNYRDNYQSFCKWLYDAKRRQDSLESMKFGDSNTVMRFLNEQKNLHSEISGKRDKSEEVHKIAELCANSIKDYELQLASYTSGLETLLNIPIKRTMVQSPSGVILQEAADIHARYIELLTRSGDYYRFLSEMLKSLEDLKLKNTKIEVLEEELRLARDANSENCNKNKFLDQNLQKYQAECSQFKAKLVSLEELKRQAELDGKSAKQNLDKCYGQIKELNEKITRLTYEIEDEKRRRKTVEDRFDQQKNDYDQLQKARQCEKENLSWQKLESEKAIKEKEYEIERLRVLLQEEGARKREYENELAKVRNHYNEEMSNLRNKYETEINITKTTIKEISMQKEDDSKNLRNQMDRLSRENRDLKDEIVRLNDSILQATEQRRRAEENALQQKACGSETMQKKQRLEIELKQVIQQRSEDNARHKQSLEEAAKTIQDKNKEIERLKAEYQEEAKRRWEYENELSKVRNSYDEEIISLKNQFETEINITKTTIHQLTMQKEEDTSGYRAQIDNLTRENRSLCEEVKRLKNTLAQTTENLRRVEENAQQQKATGSEMSQRKQQLEIELRQVTQMRTEESMRYKQSLDDAAKTIQDKNKEIERLKQLVDKETNERKCLEDENSKLQRVQYDLQKANNSATEAMSKLKVQEQELTRLRIDYERVSQERTVKDQDITRIQSSLKDLQLQKQKAEEELSRLKRTASDESSKRKMLEEELEAMRRSLKEQAVKITNLTQQLEQASIVKKRSEDDLRQQRDVLDGHVREKQRTQEELRRLSLDVEALRRQLVQEQENVKQAHLRNEHFQKAIEDKSRSLNESKIEIERLQSLTENLTKEHLMLEEELRNLRLEYDDLRRGRSEADSDKNSTISELRSQLQISNNRTLELQGLINDLQRERENLRQEIEKFQKQALEASNRIQESKSQCTQVVQERESLLVKIKVLEQDKARLQRLEDELNRAKATLEAESRVKQRLECEKQQIQNDLNQWKTQYSRKEETIRKIESEREKSEREKNSLRSEIERLQAEIKRIEERCRRKLEDSSRETQSQLESERCRLQKEIEKLRQRPYGSHRETQTEYEWTVDSSKLVFDGLRKKVTAMQLYECQLIDKTTLDKLLKGKKSVEEVASEIQPFLRGAGAIAGASASPKEKYSLVEAKRKKFITPESTVMLLEAQAATGGIIDPHRNEKLTVDNAVARDLIDFDDRQQIYTAEKAITGFDDPFSGKTVSVSEAIKKNLIDRETGMRLLEAQLASGGVVDPVNSVFLPKDVALARGLIDRDLYRSLNDPRDSQKNFVDPITKKKVSYMQLRERCRIEPHTGLLLLSVQKRSMSFQGIRQPVTVTELVDSGILRPSTVNELESGQISYDEVGERIKDFLQGSSCIAGIYNETTKQKLGIYEAMKIGLVRPGTALELLEAQAATGFIVDPVSNLRLPVEEAYKRGLVGIEFKEKLLSAERAVTGYNDPETGNIISLFQAMNKELIEKGHGIRLLEAQIATGGIIDPKESHRLPVDMAYKRGYFNEELSEILSDPSDDTKGFFDPNTEENLTYLQLKERCIKDEETGLCLLPLKEKKKQVQTSQKNTLRKRRVVIVDPETNKEMSVQEAYKKGLIDYDTFKELCEQECEWEEITITGSDGSTRVVLVDRKTGSQYDIQDAIDKGLVDRKFFDQYRSGSLSLTQFADMISLKNGVGNSSGLGGSVNDDVFSSSRHDSVSKISTISSVRNLTIRSSSLSDPLEESSPIAAIFDTENLEKISIAEGIERGIVDSITGQRLLEAQACTGGIIHPTTGQKLSLQDAVNQGLIDQDMATRLKPAQKAFIGFEGVKGKKKMSAAEAVKEKWLPYEAGQRFLEFQFLTGGLVDPEVHGRISTEEAIRKGFIDGRAAQRLQDISSYAKILTCPKTKLKISYKDAMNRSMVEDITGLRLLEAASVSSKGLPSPYNMSAPGSRSGSRSGSRSGSRSGSRSGSRRGSFDATGNSSYSYSYSFSSSSIGGY</sequence>
<name>DESP_MOUSE</name>
<dbReference type="EMBL" id="AC140331">
    <property type="status" value="NOT_ANNOTATED_CDS"/>
    <property type="molecule type" value="Genomic_DNA"/>
</dbReference>
<dbReference type="CCDS" id="CCDS49239.1"/>
<dbReference type="RefSeq" id="NP_076331.2">
    <property type="nucleotide sequence ID" value="NM_023842.3"/>
</dbReference>
<dbReference type="SMR" id="E9Q557"/>
<dbReference type="BioGRID" id="224908">
    <property type="interactions" value="27"/>
</dbReference>
<dbReference type="FunCoup" id="E9Q557">
    <property type="interactions" value="476"/>
</dbReference>
<dbReference type="IntAct" id="E9Q557">
    <property type="interactions" value="36"/>
</dbReference>
<dbReference type="MINT" id="E9Q557"/>
<dbReference type="STRING" id="10090.ENSMUSP00000115062"/>
<dbReference type="GlyGen" id="E9Q557">
    <property type="glycosylation" value="1 site, 1 O-linked glycan (1 site)"/>
</dbReference>
<dbReference type="iPTMnet" id="E9Q557"/>
<dbReference type="PhosphoSitePlus" id="E9Q557"/>
<dbReference type="SwissPalm" id="E9Q557"/>
<dbReference type="CPTAC" id="non-CPTAC-3703"/>
<dbReference type="jPOST" id="E9Q557"/>
<dbReference type="PaxDb" id="10090-ENSMUSP00000115062"/>
<dbReference type="PeptideAtlas" id="E9Q557"/>
<dbReference type="ProteomicsDB" id="279376"/>
<dbReference type="Antibodypedia" id="24671">
    <property type="antibodies" value="321 antibodies from 38 providers"/>
</dbReference>
<dbReference type="DNASU" id="109620"/>
<dbReference type="Ensembl" id="ENSMUST00000124830.3">
    <property type="protein sequence ID" value="ENSMUSP00000115062.2"/>
    <property type="gene ID" value="ENSMUSG00000054889.11"/>
</dbReference>
<dbReference type="GeneID" id="109620"/>
<dbReference type="KEGG" id="mmu:109620"/>
<dbReference type="UCSC" id="uc007qdk.2">
    <property type="organism name" value="mouse"/>
</dbReference>
<dbReference type="AGR" id="MGI:109611"/>
<dbReference type="CTD" id="1832"/>
<dbReference type="MGI" id="MGI:109611">
    <property type="gene designation" value="Dsp"/>
</dbReference>
<dbReference type="VEuPathDB" id="HostDB:ENSMUSG00000054889"/>
<dbReference type="eggNOG" id="KOG0516">
    <property type="taxonomic scope" value="Eukaryota"/>
</dbReference>
<dbReference type="GeneTree" id="ENSGT00940000154843"/>
<dbReference type="InParanoid" id="E9Q557"/>
<dbReference type="OMA" id="KYGDGMQ"/>
<dbReference type="OrthoDB" id="8938928at2759"/>
<dbReference type="PhylomeDB" id="E9Q557"/>
<dbReference type="TreeFam" id="TF106435"/>
<dbReference type="Reactome" id="R-MMU-351906">
    <property type="pathway name" value="Apoptotic cleavage of cell adhesion proteins"/>
</dbReference>
<dbReference type="Reactome" id="R-MMU-6798695">
    <property type="pathway name" value="Neutrophil degranulation"/>
</dbReference>
<dbReference type="Reactome" id="R-MMU-6805567">
    <property type="pathway name" value="Keratinization"/>
</dbReference>
<dbReference type="Reactome" id="R-MMU-6809371">
    <property type="pathway name" value="Formation of the cornified envelope"/>
</dbReference>
<dbReference type="Reactome" id="R-MMU-9696264">
    <property type="pathway name" value="RND3 GTPase cycle"/>
</dbReference>
<dbReference type="Reactome" id="R-MMU-9696273">
    <property type="pathway name" value="RND1 GTPase cycle"/>
</dbReference>
<dbReference type="BioGRID-ORCS" id="109620">
    <property type="hits" value="0 hits in 78 CRISPR screens"/>
</dbReference>
<dbReference type="ChiTaRS" id="Dsp">
    <property type="organism name" value="mouse"/>
</dbReference>
<dbReference type="PRO" id="PR:E9Q557"/>
<dbReference type="Proteomes" id="UP000000589">
    <property type="component" value="Chromosome 13"/>
</dbReference>
<dbReference type="RNAct" id="E9Q557">
    <property type="molecule type" value="protein"/>
</dbReference>
<dbReference type="Bgee" id="ENSMUSG00000054889">
    <property type="expression patterns" value="Expressed in tail skin and 255 other cell types or tissues"/>
</dbReference>
<dbReference type="ExpressionAtlas" id="E9Q557">
    <property type="expression patterns" value="baseline and differential"/>
</dbReference>
<dbReference type="GO" id="GO:0005912">
    <property type="term" value="C:adherens junction"/>
    <property type="evidence" value="ECO:0000314"/>
    <property type="project" value="UniProtKB"/>
</dbReference>
<dbReference type="GO" id="GO:0016323">
    <property type="term" value="C:basolateral plasma membrane"/>
    <property type="evidence" value="ECO:0000314"/>
    <property type="project" value="MGI"/>
</dbReference>
<dbReference type="GO" id="GO:0005911">
    <property type="term" value="C:cell-cell junction"/>
    <property type="evidence" value="ECO:0000314"/>
    <property type="project" value="MGI"/>
</dbReference>
<dbReference type="GO" id="GO:0001533">
    <property type="term" value="C:cornified envelope"/>
    <property type="evidence" value="ECO:0007669"/>
    <property type="project" value="Ensembl"/>
</dbReference>
<dbReference type="GO" id="GO:0005737">
    <property type="term" value="C:cytoplasm"/>
    <property type="evidence" value="ECO:0000314"/>
    <property type="project" value="UniProtKB"/>
</dbReference>
<dbReference type="GO" id="GO:0005856">
    <property type="term" value="C:cytoskeleton"/>
    <property type="evidence" value="ECO:0007669"/>
    <property type="project" value="InterPro"/>
</dbReference>
<dbReference type="GO" id="GO:0030057">
    <property type="term" value="C:desmosome"/>
    <property type="evidence" value="ECO:0000314"/>
    <property type="project" value="UniProtKB"/>
</dbReference>
<dbReference type="GO" id="GO:0005916">
    <property type="term" value="C:fascia adherens"/>
    <property type="evidence" value="ECO:0007669"/>
    <property type="project" value="Ensembl"/>
</dbReference>
<dbReference type="GO" id="GO:0014704">
    <property type="term" value="C:intercalated disc"/>
    <property type="evidence" value="ECO:0000314"/>
    <property type="project" value="UniProtKB"/>
</dbReference>
<dbReference type="GO" id="GO:0005886">
    <property type="term" value="C:plasma membrane"/>
    <property type="evidence" value="ECO:0000314"/>
    <property type="project" value="UniProtKB"/>
</dbReference>
<dbReference type="GO" id="GO:0005080">
    <property type="term" value="F:protein kinase C binding"/>
    <property type="evidence" value="ECO:0007669"/>
    <property type="project" value="Ensembl"/>
</dbReference>
<dbReference type="GO" id="GO:0097110">
    <property type="term" value="F:scaffold protein binding"/>
    <property type="evidence" value="ECO:0007669"/>
    <property type="project" value="Ensembl"/>
</dbReference>
<dbReference type="GO" id="GO:0034332">
    <property type="term" value="P:adherens junction organization"/>
    <property type="evidence" value="ECO:0000315"/>
    <property type="project" value="MGI"/>
</dbReference>
<dbReference type="GO" id="GO:0086073">
    <property type="term" value="P:bundle of His cell-Purkinje myocyte adhesion involved in cell communication"/>
    <property type="evidence" value="ECO:0007669"/>
    <property type="project" value="Ensembl"/>
</dbReference>
<dbReference type="GO" id="GO:0098609">
    <property type="term" value="P:cell-cell adhesion"/>
    <property type="evidence" value="ECO:0000315"/>
    <property type="project" value="MGI"/>
</dbReference>
<dbReference type="GO" id="GO:0002934">
    <property type="term" value="P:desmosome organization"/>
    <property type="evidence" value="ECO:0000315"/>
    <property type="project" value="BHF-UCL"/>
</dbReference>
<dbReference type="GO" id="GO:0090136">
    <property type="term" value="P:epithelial cell-cell adhesion"/>
    <property type="evidence" value="ECO:0000266"/>
    <property type="project" value="MGI"/>
</dbReference>
<dbReference type="GO" id="GO:0045104">
    <property type="term" value="P:intermediate filament cytoskeleton organization"/>
    <property type="evidence" value="ECO:0000315"/>
    <property type="project" value="MGI"/>
</dbReference>
<dbReference type="GO" id="GO:0045109">
    <property type="term" value="P:intermediate filament organization"/>
    <property type="evidence" value="ECO:0000315"/>
    <property type="project" value="BHF-UCL"/>
</dbReference>
<dbReference type="GO" id="GO:0030216">
    <property type="term" value="P:keratinocyte differentiation"/>
    <property type="evidence" value="ECO:0007669"/>
    <property type="project" value="Ensembl"/>
</dbReference>
<dbReference type="GO" id="GO:0150105">
    <property type="term" value="P:protein localization to cell-cell junction"/>
    <property type="evidence" value="ECO:0000315"/>
    <property type="project" value="BHF-UCL"/>
</dbReference>
<dbReference type="GO" id="GO:0086091">
    <property type="term" value="P:regulation of heart rate by cardiac conduction"/>
    <property type="evidence" value="ECO:0007669"/>
    <property type="project" value="Ensembl"/>
</dbReference>
<dbReference type="GO" id="GO:0098911">
    <property type="term" value="P:regulation of ventricular cardiac muscle cell action potential"/>
    <property type="evidence" value="ECO:0007669"/>
    <property type="project" value="Ensembl"/>
</dbReference>
<dbReference type="GO" id="GO:0043588">
    <property type="term" value="P:skin development"/>
    <property type="evidence" value="ECO:0000315"/>
    <property type="project" value="MGI"/>
</dbReference>
<dbReference type="GO" id="GO:0003223">
    <property type="term" value="P:ventricular compact myocardium morphogenesis"/>
    <property type="evidence" value="ECO:0000315"/>
    <property type="project" value="BHF-UCL"/>
</dbReference>
<dbReference type="CDD" id="cd00176">
    <property type="entry name" value="SPEC"/>
    <property type="match status" value="1"/>
</dbReference>
<dbReference type="FunFam" id="1.20.58.60:FF:000125">
    <property type="entry name" value="Desmoplakin"/>
    <property type="match status" value="1"/>
</dbReference>
<dbReference type="FunFam" id="1.20.58.60:FF:000123">
    <property type="entry name" value="Desmoplakin a"/>
    <property type="match status" value="1"/>
</dbReference>
<dbReference type="FunFam" id="2.30.30.40:FF:000102">
    <property type="entry name" value="Desmoplakin a"/>
    <property type="match status" value="1"/>
</dbReference>
<dbReference type="FunFam" id="3.30.160.780:FF:000001">
    <property type="entry name" value="Plectin a"/>
    <property type="match status" value="1"/>
</dbReference>
<dbReference type="FunFam" id="3.90.1290.10:FF:000001">
    <property type="entry name" value="Plectin a"/>
    <property type="match status" value="2"/>
</dbReference>
<dbReference type="FunFam" id="3.90.1290.10:FF:000002">
    <property type="entry name" value="Plectin a"/>
    <property type="match status" value="1"/>
</dbReference>
<dbReference type="FunFam" id="1.20.58.60:FF:000010">
    <property type="entry name" value="plectin isoform X2"/>
    <property type="match status" value="1"/>
</dbReference>
<dbReference type="Gene3D" id="1.20.58.1060">
    <property type="match status" value="1"/>
</dbReference>
<dbReference type="Gene3D" id="1.20.58.60">
    <property type="match status" value="2"/>
</dbReference>
<dbReference type="Gene3D" id="3.30.160.780">
    <property type="match status" value="1"/>
</dbReference>
<dbReference type="Gene3D" id="3.90.1290.10">
    <property type="entry name" value="Plakin repeat"/>
    <property type="match status" value="3"/>
</dbReference>
<dbReference type="Gene3D" id="2.30.30.40">
    <property type="entry name" value="SH3 Domains"/>
    <property type="match status" value="1"/>
</dbReference>
<dbReference type="InterPro" id="IPR041615">
    <property type="entry name" value="Desmoplakin_SH3"/>
</dbReference>
<dbReference type="InterPro" id="IPR041573">
    <property type="entry name" value="Desmoplakin_Spectrin-like"/>
</dbReference>
<dbReference type="InterPro" id="IPR043197">
    <property type="entry name" value="Plakin"/>
</dbReference>
<dbReference type="InterPro" id="IPR035915">
    <property type="entry name" value="Plakin_repeat_sf"/>
</dbReference>
<dbReference type="InterPro" id="IPR001101">
    <property type="entry name" value="Plectin_repeat"/>
</dbReference>
<dbReference type="InterPro" id="IPR001452">
    <property type="entry name" value="SH3_domain"/>
</dbReference>
<dbReference type="InterPro" id="IPR018159">
    <property type="entry name" value="Spectrin/alpha-actinin"/>
</dbReference>
<dbReference type="PANTHER" id="PTHR23169:SF26">
    <property type="entry name" value="DESMOPLAKIN"/>
    <property type="match status" value="1"/>
</dbReference>
<dbReference type="PANTHER" id="PTHR23169">
    <property type="entry name" value="ENVOPLAKIN"/>
    <property type="match status" value="1"/>
</dbReference>
<dbReference type="Pfam" id="PF00681">
    <property type="entry name" value="Plectin"/>
    <property type="match status" value="8"/>
</dbReference>
<dbReference type="Pfam" id="PF17902">
    <property type="entry name" value="SH3_10"/>
    <property type="match status" value="1"/>
</dbReference>
<dbReference type="Pfam" id="PF18373">
    <property type="entry name" value="Spectrin_2"/>
    <property type="match status" value="1"/>
</dbReference>
<dbReference type="Pfam" id="PF21019">
    <property type="entry name" value="Spectrin_3"/>
    <property type="match status" value="1"/>
</dbReference>
<dbReference type="SMART" id="SM00250">
    <property type="entry name" value="PLEC"/>
    <property type="match status" value="18"/>
</dbReference>
<dbReference type="SMART" id="SM00150">
    <property type="entry name" value="SPEC"/>
    <property type="match status" value="2"/>
</dbReference>
<dbReference type="SUPFAM" id="SSF75399">
    <property type="entry name" value="Plakin repeat"/>
    <property type="match status" value="4"/>
</dbReference>
<dbReference type="SUPFAM" id="SSF46966">
    <property type="entry name" value="Spectrin repeat"/>
    <property type="match status" value="3"/>
</dbReference>
<dbReference type="PROSITE" id="PS50002">
    <property type="entry name" value="SH3"/>
    <property type="match status" value="1"/>
</dbReference>
<accession>E9Q557</accession>
<protein>
    <recommendedName>
        <fullName evidence="18">Desmoplakin</fullName>
        <shortName>DP</shortName>
    </recommendedName>
</protein>
<feature type="chain" id="PRO_0000410831" description="Desmoplakin">
    <location>
        <begin position="1"/>
        <end position="2883"/>
    </location>
</feature>
<feature type="repeat" description="Spectrin 1">
    <location>
        <begin position="190"/>
        <end position="283"/>
    </location>
</feature>
<feature type="repeat" description="Spectrin 2">
    <location>
        <begin position="284"/>
        <end position="387"/>
    </location>
</feature>
<feature type="repeat" description="Spectrin 3a">
    <location>
        <begin position="388"/>
        <end position="458"/>
    </location>
</feature>
<feature type="domain" description="SH3" evidence="5">
    <location>
        <begin position="470"/>
        <end position="527"/>
    </location>
</feature>
<feature type="repeat" description="Spectrin 3b">
    <location>
        <begin position="528"/>
        <end position="557"/>
    </location>
</feature>
<feature type="repeat" description="Spectrin 4">
    <location>
        <begin position="558"/>
        <end position="639"/>
    </location>
</feature>
<feature type="repeat" description="Spectrin 5">
    <location>
        <begin position="666"/>
        <end position="781"/>
    </location>
</feature>
<feature type="repeat" description="Spectrin 6">
    <location>
        <begin position="782"/>
        <end position="895"/>
    </location>
</feature>
<feature type="repeat" description="Plectin 1">
    <location>
        <begin position="2021"/>
        <end position="2057"/>
    </location>
</feature>
<feature type="repeat" description="Plectin 2">
    <location>
        <begin position="2058"/>
        <end position="2095"/>
    </location>
</feature>
<feature type="repeat" description="Plectin 3">
    <location>
        <begin position="2096"/>
        <end position="2133"/>
    </location>
</feature>
<feature type="repeat" description="Plectin 4">
    <location>
        <begin position="2134"/>
        <end position="2171"/>
    </location>
</feature>
<feature type="repeat" description="Plectin 5">
    <location>
        <begin position="2175"/>
        <end position="2209"/>
    </location>
</feature>
<feature type="repeat" description="Plectin 6">
    <location>
        <begin position="2210"/>
        <end position="2245"/>
    </location>
</feature>
<feature type="repeat" description="Plectin 7">
    <location>
        <begin position="2263"/>
        <end position="2300"/>
    </location>
</feature>
<feature type="repeat" description="Plectin 8">
    <location>
        <begin position="2301"/>
        <end position="2338"/>
    </location>
</feature>
<feature type="repeat" description="Plectin 9">
    <location>
        <begin position="2339"/>
        <end position="2376"/>
    </location>
</feature>
<feature type="repeat" description="Plectin 10">
    <location>
        <begin position="2377"/>
        <end position="2414"/>
    </location>
</feature>
<feature type="repeat" description="Plectin 11">
    <location>
        <begin position="2418"/>
        <end position="2452"/>
    </location>
</feature>
<feature type="repeat" description="Plectin 12">
    <location>
        <begin position="2468"/>
        <end position="2505"/>
    </location>
</feature>
<feature type="repeat" description="Plectin 13">
    <location>
        <begin position="2519"/>
        <end position="2556"/>
    </location>
</feature>
<feature type="repeat" description="Plectin 14">
    <location>
        <begin position="2622"/>
        <end position="2659"/>
    </location>
</feature>
<feature type="repeat" description="Plectin 15">
    <location>
        <begin position="2660"/>
        <end position="2697"/>
    </location>
</feature>
<feature type="repeat" description="Plectin 16">
    <location>
        <begin position="2736"/>
        <end position="2773"/>
    </location>
</feature>
<feature type="repeat" description="Plectin 17">
    <location>
        <begin position="2774"/>
        <end position="2811"/>
    </location>
</feature>
<feature type="region of interest" description="Globular 1">
    <location>
        <begin position="1"/>
        <end position="1068"/>
    </location>
</feature>
<feature type="region of interest" description="Interaction with PKP1, JUP, PKP2" evidence="3">
    <location>
        <begin position="1"/>
        <end position="596"/>
    </location>
</feature>
<feature type="region of interest" description="Disordered" evidence="6">
    <location>
        <begin position="1"/>
        <end position="21"/>
    </location>
</feature>
<feature type="region of interest" description="Central fibrous rod domain">
    <location>
        <begin position="1069"/>
        <end position="1957"/>
    </location>
</feature>
<feature type="region of interest" description="Globular 2">
    <location>
        <begin position="1958"/>
        <end position="2882"/>
    </location>
</feature>
<feature type="region of interest" description="4.5 X 38 AA tandem repeats (Domain A)">
    <location>
        <begin position="1972"/>
        <end position="2220"/>
    </location>
</feature>
<feature type="region of interest" description="4.5 X 38 AA tandem repeats (Domain B)">
    <location>
        <begin position="2256"/>
        <end position="2458"/>
    </location>
</feature>
<feature type="region of interest" description="4.5 X 38 AA tandem repeats (Domain C)">
    <location>
        <begin position="2621"/>
        <end position="2833"/>
    </location>
</feature>
<feature type="region of interest" description="Disordered" evidence="6">
    <location>
        <begin position="2822"/>
        <end position="2883"/>
    </location>
</feature>
<feature type="region of interest" description="6 X 4 AA tandem repeats of G-S-R-[SR]">
    <location>
        <begin position="2835"/>
        <end position="2858"/>
    </location>
</feature>
<feature type="coiled-coil region" evidence="4">
    <location>
        <begin position="1034"/>
        <end position="1956"/>
    </location>
</feature>
<feature type="compositionally biased region" description="Low complexity" evidence="6">
    <location>
        <begin position="2835"/>
        <end position="2858"/>
    </location>
</feature>
<feature type="compositionally biased region" description="Low complexity" evidence="6">
    <location>
        <begin position="2867"/>
        <end position="2883"/>
    </location>
</feature>
<feature type="modified residue" description="Phosphoserine" evidence="20">
    <location>
        <position position="22"/>
    </location>
</feature>
<feature type="modified residue" description="Phosphothreonine" evidence="20">
    <location>
        <position position="59"/>
    </location>
</feature>
<feature type="modified residue" description="Phosphoserine" evidence="20">
    <location>
        <position position="65"/>
    </location>
</feature>
<feature type="modified residue" description="Phosphotyrosine" evidence="20">
    <location>
        <position position="68"/>
    </location>
</feature>
<feature type="modified residue" description="Phosphothreonine" evidence="20">
    <location>
        <position position="73"/>
    </location>
</feature>
<feature type="modified residue" description="Phosphoserine" evidence="3">
    <location>
        <position position="177"/>
    </location>
</feature>
<feature type="modified residue" description="Phosphoserine" evidence="3">
    <location>
        <position position="178"/>
    </location>
</feature>
<feature type="modified residue" description="Phosphoserine" evidence="3">
    <location>
        <position position="188"/>
    </location>
</feature>
<feature type="modified residue" description="Phosphoserine" evidence="3">
    <location>
        <position position="1670"/>
    </location>
</feature>
<feature type="modified residue" description="Phosphoserine" evidence="3">
    <location>
        <position position="1720"/>
    </location>
</feature>
<feature type="modified residue" description="Phosphoserine" evidence="3">
    <location>
        <position position="2036"/>
    </location>
</feature>
<feature type="modified residue" description="Phosphoserine" evidence="3">
    <location>
        <position position="2219"/>
    </location>
</feature>
<feature type="modified residue" description="Phosphoserine" evidence="20">
    <location>
        <position position="2221"/>
    </location>
</feature>
<feature type="modified residue" description="Phosphoserine" evidence="3">
    <location>
        <position position="2237"/>
    </location>
</feature>
<feature type="modified residue" description="Phosphoserine" evidence="3">
    <location>
        <position position="2822"/>
    </location>
</feature>
<feature type="modified residue" description="Phosphoserine" evidence="3">
    <location>
        <position position="2827"/>
    </location>
</feature>
<feature type="modified residue" description="Phosphotyrosine" evidence="3">
    <location>
        <position position="2829"/>
    </location>
</feature>
<feature type="modified residue" description="Phosphoserine" evidence="20">
    <location>
        <position position="2832"/>
    </location>
</feature>
<feature type="modified residue" description="Phosphoserine" evidence="19 20">
    <location>
        <position position="2836"/>
    </location>
</feature>
<feature type="modified residue" description="Omega-N-methylarginine" evidence="21">
    <location>
        <position position="2837"/>
    </location>
</feature>
<feature type="modified residue" description="Omega-N-methylarginine" evidence="21">
    <location>
        <position position="2858"/>
    </location>
</feature>
<feature type="modified residue" description="Phosphoserine" evidence="3">
    <location>
        <position position="2860"/>
    </location>
</feature>
<feature type="modified residue" description="Phosphothreonine" evidence="3">
    <location>
        <position position="2864"/>
    </location>
</feature>
<feature type="modified residue" description="Phosphoserine" evidence="3">
    <location>
        <position position="2879"/>
    </location>
</feature>
<feature type="lipid moiety-binding region" description="Omega-hydroxyceramide glutamate ester" evidence="1">
    <location>
        <position position="2492"/>
    </location>
</feature>
<reference key="1">
    <citation type="journal article" date="2009" name="PLoS Biol.">
        <title>Lineage-specific biology revealed by a finished genome assembly of the mouse.</title>
        <authorList>
            <person name="Church D.M."/>
            <person name="Goodstadt L."/>
            <person name="Hillier L.W."/>
            <person name="Zody M.C."/>
            <person name="Goldstein S."/>
            <person name="She X."/>
            <person name="Bult C.J."/>
            <person name="Agarwala R."/>
            <person name="Cherry J.L."/>
            <person name="DiCuccio M."/>
            <person name="Hlavina W."/>
            <person name="Kapustin Y."/>
            <person name="Meric P."/>
            <person name="Maglott D."/>
            <person name="Birtle Z."/>
            <person name="Marques A.C."/>
            <person name="Graves T."/>
            <person name="Zhou S."/>
            <person name="Teague B."/>
            <person name="Potamousis K."/>
            <person name="Churas C."/>
            <person name="Place M."/>
            <person name="Herschleb J."/>
            <person name="Runnheim R."/>
            <person name="Forrest D."/>
            <person name="Amos-Landgraf J."/>
            <person name="Schwartz D.C."/>
            <person name="Cheng Z."/>
            <person name="Lindblad-Toh K."/>
            <person name="Eichler E.E."/>
            <person name="Ponting C.P."/>
        </authorList>
    </citation>
    <scope>NUCLEOTIDE SEQUENCE [LARGE SCALE GENOMIC DNA]</scope>
    <source>
        <strain>C57BL/6J</strain>
    </source>
</reference>
<reference key="2">
    <citation type="journal article" date="2002" name="Eur. J. Cell Biol.">
        <title>Loss of desmoglein 2 suggests essential functions for early embryonic development and proliferation of embryonal stem cells.</title>
        <authorList>
            <person name="Eshkind L."/>
            <person name="Tian Q."/>
            <person name="Schmidt A."/>
            <person name="Franke W.W."/>
            <person name="Windoffer R."/>
            <person name="Leube R.E."/>
        </authorList>
    </citation>
    <scope>SUBCELLULAR LOCATION</scope>
</reference>
<reference key="3">
    <citation type="journal article" date="2004" name="J. Cell Biol.">
        <title>Requirement of plakophilin 2 for heart morphogenesis and cardiac junction formation.</title>
        <authorList>
            <person name="Grossmann K.S."/>
            <person name="Grund C."/>
            <person name="Huelsken J."/>
            <person name="Behrend M."/>
            <person name="Erdmann B."/>
            <person name="Franke W.W."/>
            <person name="Birchmeier W."/>
        </authorList>
    </citation>
    <scope>SUBCELLULAR LOCATION</scope>
</reference>
<reference key="4">
    <citation type="journal article" date="2007" name="Proc. Natl. Acad. Sci. U.S.A.">
        <title>Large-scale phosphorylation analysis of mouse liver.</title>
        <authorList>
            <person name="Villen J."/>
            <person name="Beausoleil S.A."/>
            <person name="Gerber S.A."/>
            <person name="Gygi S.P."/>
        </authorList>
    </citation>
    <scope>PHOSPHORYLATION [LARGE SCALE ANALYSIS] AT SER-2836</scope>
    <scope>IDENTIFICATION BY MASS SPECTROMETRY [LARGE SCALE ANALYSIS]</scope>
    <source>
        <tissue>Liver</tissue>
    </source>
</reference>
<reference key="5">
    <citation type="journal article" date="2008" name="J. Invest. Dermatol.">
        <title>Plakophilin-3-deficient mice develop hair coat abnormalities and are prone to cutaneous inflammation.</title>
        <authorList>
            <person name="Sklyarova T."/>
            <person name="Bonne S."/>
            <person name="D'Hooge P."/>
            <person name="Denecker G."/>
            <person name="Goossens S."/>
            <person name="De Rycke R."/>
            <person name="Borgonie G."/>
            <person name="Boesl M."/>
            <person name="van Roy F."/>
            <person name="van Hengel J."/>
        </authorList>
    </citation>
    <scope>SUBCELLULAR LOCATION</scope>
    <scope>TISSUE SPECIFICITY</scope>
</reference>
<reference key="6">
    <citation type="journal article" date="2010" name="Cell">
        <title>A tissue-specific atlas of mouse protein phosphorylation and expression.</title>
        <authorList>
            <person name="Huttlin E.L."/>
            <person name="Jedrychowski M.P."/>
            <person name="Elias J.E."/>
            <person name="Goswami T."/>
            <person name="Rad R."/>
            <person name="Beausoleil S.A."/>
            <person name="Villen J."/>
            <person name="Haas W."/>
            <person name="Sowa M.E."/>
            <person name="Gygi S.P."/>
        </authorList>
    </citation>
    <scope>PHOSPHORYLATION [LARGE SCALE ANALYSIS] AT SER-22; THR-59; SER-65; TYR-68; THR-73; SER-2221; SER-2832 AND SER-2836</scope>
    <scope>IDENTIFICATION BY MASS SPECTROMETRY [LARGE SCALE ANALYSIS]</scope>
    <source>
        <tissue>Brain</tissue>
        <tissue>Brown adipose tissue</tissue>
        <tissue>Heart</tissue>
        <tissue>Kidney</tissue>
        <tissue>Liver</tissue>
        <tissue>Lung</tissue>
        <tissue>Pancreas</tissue>
        <tissue>Testis</tissue>
    </source>
</reference>
<reference key="7">
    <citation type="journal article" date="2011" name="J. Cell Sci.">
        <title>PERP regulates enamel formation via effects on cell-cell adhesion and gene expression.</title>
        <authorList>
            <person name="Jheon A.H."/>
            <person name="Mostowfi P."/>
            <person name="Snead M.L."/>
            <person name="Ihrie R.A."/>
            <person name="Sone E."/>
            <person name="Pramparo T."/>
            <person name="Attardi L.D."/>
            <person name="Klein O.D."/>
        </authorList>
    </citation>
    <scope>SUBCELLULAR LOCATION</scope>
</reference>
<reference key="8">
    <citation type="journal article" date="2012" name="Breast Cancer Res.">
        <title>Deficiency of the p53/p63 target Perp alters mammary gland homeostasis and promotes cancer.</title>
        <authorList>
            <person name="Dusek R.L."/>
            <person name="Bascom J.L."/>
            <person name="Vogel H."/>
            <person name="Baron S."/>
            <person name="Borowsky A.D."/>
            <person name="Bissell M.J."/>
            <person name="Attardi L.D."/>
        </authorList>
    </citation>
    <scope>SUBCELLULAR LOCATION</scope>
</reference>
<reference key="9">
    <citation type="journal article" date="2014" name="Mol. Cell. Proteomics">
        <title>Immunoaffinity enrichment and mass spectrometry analysis of protein methylation.</title>
        <authorList>
            <person name="Guo A."/>
            <person name="Gu H."/>
            <person name="Zhou J."/>
            <person name="Mulhern D."/>
            <person name="Wang Y."/>
            <person name="Lee K.A."/>
            <person name="Yang V."/>
            <person name="Aguiar M."/>
            <person name="Kornhauser J."/>
            <person name="Jia X."/>
            <person name="Ren J."/>
            <person name="Beausoleil S.A."/>
            <person name="Silva J.C."/>
            <person name="Vemulapalli V."/>
            <person name="Bedford M.T."/>
            <person name="Comb M.J."/>
        </authorList>
    </citation>
    <scope>METHYLATION [LARGE SCALE ANALYSIS] AT ARG-2837 AND ARG-2858</scope>
    <scope>IDENTIFICATION BY MASS SPECTROMETRY [LARGE SCALE ANALYSIS]</scope>
    <source>
        <tissue>Brain</tissue>
    </source>
</reference>
<reference key="10">
    <citation type="journal article" date="2015" name="Nat. Commun.">
        <title>Evolutionarily conserved intercalated disc protein Tmem65 regulates cardiac conduction and connexin 43 function.</title>
        <authorList>
            <person name="Sharma P."/>
            <person name="Abbasi C."/>
            <person name="Lazic S."/>
            <person name="Teng A.C."/>
            <person name="Wang D."/>
            <person name="Dubois N."/>
            <person name="Ignatchenko V."/>
            <person name="Wong V."/>
            <person name="Liu J."/>
            <person name="Araki T."/>
            <person name="Tiburcy M."/>
            <person name="Ackerley C."/>
            <person name="Zimmermann W.H."/>
            <person name="Hamilton R."/>
            <person name="Sun Y."/>
            <person name="Liu P.P."/>
            <person name="Keller G."/>
            <person name="Stagljar I."/>
            <person name="Scott I.C."/>
            <person name="Kislinger T."/>
            <person name="Gramolini A.O."/>
        </authorList>
    </citation>
    <scope>INTERACTION WITH TMEM65</scope>
    <scope>SUBCELLULAR LOCATION</scope>
    <scope>TISSUE SPECIFICITY</scope>
</reference>
<reference key="11">
    <citation type="journal article" date="2016" name="J. Invest. Dermatol.">
        <title>Antagonistic Regulation of Intercellular Cohesion by Plakophilins 1 and 3.</title>
        <authorList>
            <person name="Keil R."/>
            <person name="Rietscher K."/>
            <person name="Hatzfeld M."/>
        </authorList>
    </citation>
    <scope>SUBCELLULAR LOCATION</scope>
    <scope>TISSUE SPECIFICITY</scope>
</reference>
<reference key="12">
    <citation type="journal article" date="2016" name="J. Invest. Dermatol.">
        <title>Growth Retardation, Loss of Desmosomal Adhesion, and Impaired Tight Junction Function Identify a Unique Role of Plakophilin 1 In Vivo.</title>
        <authorList>
            <person name="Rietscher K."/>
            <person name="Wolf A."/>
            <person name="Hause G."/>
            <person name="Rother A."/>
            <person name="Keil R."/>
            <person name="Magin T.M."/>
            <person name="Glass M."/>
            <person name="Niessen C.M."/>
            <person name="Hatzfeld M."/>
        </authorList>
    </citation>
    <scope>SUBCELLULAR LOCATION</scope>
    <scope>DEVELOPMENTAL STAGE</scope>
</reference>
<reference key="13">
    <citation type="journal article" date="2017" name="EMBO J.">
        <title>Phosphorylation of Pkp1 by RIPK4 regulates epidermal differentiation and skin tumorigenesis.</title>
        <authorList>
            <person name="Lee P."/>
            <person name="Jiang S."/>
            <person name="Li Y."/>
            <person name="Yue J."/>
            <person name="Gou X."/>
            <person name="Chen S.Y."/>
            <person name="Zhao Y."/>
            <person name="Schober M."/>
            <person name="Tan M."/>
            <person name="Wu X."/>
        </authorList>
    </citation>
    <scope>SUBCELLULAR LOCATION</scope>
</reference>
<reference key="14">
    <citation type="journal article" date="2024" name="Kidney Int.">
        <title>The role of desmoglein-2 in kidney disease.</title>
        <authorList>
            <person name="Xu T."/>
            <person name="Herkens L."/>
            <person name="Jia T."/>
            <person name="Klinkhammer B.M."/>
            <person name="Kant S."/>
            <person name="Krusche C.A."/>
            <person name="Buhl E.M."/>
            <person name="Hayat S."/>
            <person name="Floege J."/>
            <person name="Strnad P."/>
            <person name="Kramann R."/>
            <person name="Djudjaj S."/>
            <person name="Boor P."/>
        </authorList>
    </citation>
    <scope>SUBCELLULAR LOCATION</scope>
</reference>
<organism>
    <name type="scientific">Mus musculus</name>
    <name type="common">Mouse</name>
    <dbReference type="NCBI Taxonomy" id="10090"/>
    <lineage>
        <taxon>Eukaryota</taxon>
        <taxon>Metazoa</taxon>
        <taxon>Chordata</taxon>
        <taxon>Craniata</taxon>
        <taxon>Vertebrata</taxon>
        <taxon>Euteleostomi</taxon>
        <taxon>Mammalia</taxon>
        <taxon>Eutheria</taxon>
        <taxon>Euarchontoglires</taxon>
        <taxon>Glires</taxon>
        <taxon>Rodentia</taxon>
        <taxon>Myomorpha</taxon>
        <taxon>Muroidea</taxon>
        <taxon>Muridae</taxon>
        <taxon>Murinae</taxon>
        <taxon>Mus</taxon>
        <taxon>Mus</taxon>
    </lineage>
</organism>